<reference key="1">
    <citation type="journal article" date="1999" name="J. Virol.">
        <title>Identification of a spliced gene from Kaposi's sarcoma-associated herpesvirus encoding a protein with similarities to latent membrane proteins 1 and 2A of Epstein-Barr virus.</title>
        <authorList>
            <person name="Glenn M."/>
            <person name="Rainbow L."/>
            <person name="Aurade F."/>
            <person name="Davison A."/>
            <person name="Schulz T.F."/>
        </authorList>
    </citation>
    <scope>NUCLEOTIDE SEQUENCE [LARGE SCALE GENOMIC DNA]</scope>
</reference>
<reference key="2">
    <citation type="journal article" date="2006" name="J. Gen. Virol.">
        <title>Kaposi's sarcoma-associated herpesvirus immune modulation: an overview.</title>
        <authorList>
            <person name="Rezaee S.A.R."/>
            <person name="Cunningham C."/>
            <person name="Davison A.J."/>
            <person name="Blackbourn D.J."/>
        </authorList>
    </citation>
    <scope>NUCLEOTIDE SEQUENCE [LARGE SCALE GENOMIC DNA]</scope>
</reference>
<proteinExistence type="inferred from homology"/>
<protein>
    <recommendedName>
        <fullName>Protein K6</fullName>
    </recommendedName>
</protein>
<feature type="signal peptide" evidence="1">
    <location>
        <begin position="1"/>
        <end position="24"/>
    </location>
</feature>
<feature type="chain" id="PRO_0000423793" description="Protein K6">
    <location>
        <begin position="25"/>
        <end position="95"/>
    </location>
</feature>
<organism>
    <name type="scientific">Human herpesvirus 8 type P (isolate GK18)</name>
    <name type="common">HHV-8</name>
    <name type="synonym">Kaposi's sarcoma-associated herpesvirus</name>
    <dbReference type="NCBI Taxonomy" id="868565"/>
    <lineage>
        <taxon>Viruses</taxon>
        <taxon>Duplodnaviria</taxon>
        <taxon>Heunggongvirae</taxon>
        <taxon>Peploviricota</taxon>
        <taxon>Herviviricetes</taxon>
        <taxon>Herpesvirales</taxon>
        <taxon>Orthoherpesviridae</taxon>
        <taxon>Gammaherpesvirinae</taxon>
        <taxon>Rhadinovirus</taxon>
        <taxon>Rhadinovirus humangamma8</taxon>
        <taxon>Human herpesvirus 8</taxon>
    </lineage>
</organism>
<accession>F5HET8</accession>
<organismHost>
    <name type="scientific">Homo sapiens</name>
    <name type="common">Human</name>
    <dbReference type="NCBI Taxonomy" id="9606"/>
</organismHost>
<name>K6_HHV8P</name>
<gene>
    <name type="primary">K6</name>
</gene>
<dbReference type="EMBL" id="AF148805">
    <property type="protein sequence ID" value="ABD28864.1"/>
    <property type="molecule type" value="Genomic_DNA"/>
</dbReference>
<dbReference type="RefSeq" id="YP_001129366.1">
    <property type="nucleotide sequence ID" value="NC_009333.1"/>
</dbReference>
<dbReference type="SMR" id="F5HET8"/>
<dbReference type="BioGRID" id="1777013">
    <property type="interactions" value="1"/>
</dbReference>
<dbReference type="DNASU" id="4961510"/>
<dbReference type="GeneID" id="4961510"/>
<dbReference type="KEGG" id="vg:4961510"/>
<dbReference type="Proteomes" id="UP000000942">
    <property type="component" value="Segment"/>
</dbReference>
<dbReference type="GO" id="GO:0005615">
    <property type="term" value="C:extracellular space"/>
    <property type="evidence" value="ECO:0007669"/>
    <property type="project" value="TreeGrafter"/>
</dbReference>
<dbReference type="GO" id="GO:0048020">
    <property type="term" value="F:CCR chemokine receptor binding"/>
    <property type="evidence" value="ECO:0007669"/>
    <property type="project" value="TreeGrafter"/>
</dbReference>
<dbReference type="GO" id="GO:0008009">
    <property type="term" value="F:chemokine activity"/>
    <property type="evidence" value="ECO:0007669"/>
    <property type="project" value="InterPro"/>
</dbReference>
<dbReference type="GO" id="GO:0061844">
    <property type="term" value="P:antimicrobial humoral immune response mediated by antimicrobial peptide"/>
    <property type="evidence" value="ECO:0007669"/>
    <property type="project" value="TreeGrafter"/>
</dbReference>
<dbReference type="GO" id="GO:0070098">
    <property type="term" value="P:chemokine-mediated signaling pathway"/>
    <property type="evidence" value="ECO:0007669"/>
    <property type="project" value="TreeGrafter"/>
</dbReference>
<dbReference type="GO" id="GO:0030335">
    <property type="term" value="P:positive regulation of cell migration"/>
    <property type="evidence" value="ECO:0007669"/>
    <property type="project" value="TreeGrafter"/>
</dbReference>
<dbReference type="CDD" id="cd00272">
    <property type="entry name" value="Chemokine_CC"/>
    <property type="match status" value="1"/>
</dbReference>
<dbReference type="FunFam" id="2.40.50.40:FF:000002">
    <property type="entry name" value="C-C motif chemokine"/>
    <property type="match status" value="1"/>
</dbReference>
<dbReference type="Gene3D" id="2.40.50.40">
    <property type="match status" value="1"/>
</dbReference>
<dbReference type="InterPro" id="IPR039809">
    <property type="entry name" value="Chemokine_b/g/d"/>
</dbReference>
<dbReference type="InterPro" id="IPR001811">
    <property type="entry name" value="Chemokine_IL8-like_dom"/>
</dbReference>
<dbReference type="InterPro" id="IPR036048">
    <property type="entry name" value="Interleukin_8-like_sf"/>
</dbReference>
<dbReference type="PANTHER" id="PTHR12015:SF103">
    <property type="entry name" value="C-C MOTIF CHEMOKINE 4-RELATED"/>
    <property type="match status" value="1"/>
</dbReference>
<dbReference type="PANTHER" id="PTHR12015">
    <property type="entry name" value="SMALL INDUCIBLE CYTOKINE A"/>
    <property type="match status" value="1"/>
</dbReference>
<dbReference type="Pfam" id="PF00048">
    <property type="entry name" value="IL8"/>
    <property type="match status" value="1"/>
</dbReference>
<dbReference type="SMART" id="SM00199">
    <property type="entry name" value="SCY"/>
    <property type="match status" value="1"/>
</dbReference>
<dbReference type="SUPFAM" id="SSF54117">
    <property type="entry name" value="Interleukin 8-like chemokines"/>
    <property type="match status" value="1"/>
</dbReference>
<sequence length="95" mass="10485">MAPVHVLCCVSVLLATFYLTPTESAGSLVSYTPNSCCYGFQQHPPPVQILKEWYPTSPACPKPGVILLTKRGRQICADPSKNWVRQLMQRLPAIA</sequence>
<keyword id="KW-1185">Reference proteome</keyword>
<keyword id="KW-0732">Signal</keyword>
<evidence type="ECO:0000255" key="1"/>